<proteinExistence type="inferred from homology"/>
<keyword id="KW-0067">ATP-binding</keyword>
<keyword id="KW-0963">Cytoplasm</keyword>
<keyword id="KW-0347">Helicase</keyword>
<keyword id="KW-0378">Hydrolase</keyword>
<keyword id="KW-0472">Membrane</keyword>
<keyword id="KW-0509">mRNA transport</keyword>
<keyword id="KW-0906">Nuclear pore complex</keyword>
<keyword id="KW-0547">Nucleotide-binding</keyword>
<keyword id="KW-0539">Nucleus</keyword>
<keyword id="KW-0653">Protein transport</keyword>
<keyword id="KW-1185">Reference proteome</keyword>
<keyword id="KW-0694">RNA-binding</keyword>
<keyword id="KW-0811">Translocation</keyword>
<keyword id="KW-0813">Transport</keyword>
<comment type="function">
    <text evidence="1">ATP-dependent RNA helicase associated with the nuclear pore complex and essential for mRNA export from the nucleus. May participate in a terminal step of mRNA export through the removal of proteins that accompany mRNA through the nucleopore complex. May also be involved in early transcription (By similarity).</text>
</comment>
<comment type="catalytic activity">
    <reaction>
        <text>ATP + H2O = ADP + phosphate + H(+)</text>
        <dbReference type="Rhea" id="RHEA:13065"/>
        <dbReference type="ChEBI" id="CHEBI:15377"/>
        <dbReference type="ChEBI" id="CHEBI:15378"/>
        <dbReference type="ChEBI" id="CHEBI:30616"/>
        <dbReference type="ChEBI" id="CHEBI:43474"/>
        <dbReference type="ChEBI" id="CHEBI:456216"/>
        <dbReference type="EC" id="3.6.4.13"/>
    </reaction>
</comment>
<comment type="subunit">
    <text evidence="1">Associates with the nuclear pore complex.</text>
</comment>
<comment type="subcellular location">
    <subcellularLocation>
        <location evidence="1">Cytoplasm</location>
    </subcellularLocation>
    <subcellularLocation>
        <location>Nucleus</location>
        <location>Nuclear pore complex</location>
    </subcellularLocation>
    <subcellularLocation>
        <location evidence="1">Nucleus membrane</location>
        <topology evidence="1">Peripheral membrane protein</topology>
        <orientation evidence="1">Cytoplasmic side</orientation>
    </subcellularLocation>
    <text evidence="1">Nuclear pore complex cytoplasmic fibrils.</text>
</comment>
<comment type="domain">
    <text>The Q motif is unique to and characteristic of the DEAD box family of RNA helicases and controls ATP binding and hydrolysis.</text>
</comment>
<comment type="similarity">
    <text evidence="5">Belongs to the DEAD box helicase family. DDX19/DBP5 subfamily.</text>
</comment>
<accession>Q75C39</accession>
<evidence type="ECO:0000250" key="1"/>
<evidence type="ECO:0000255" key="2">
    <source>
        <dbReference type="PROSITE-ProRule" id="PRU00541"/>
    </source>
</evidence>
<evidence type="ECO:0000255" key="3">
    <source>
        <dbReference type="PROSITE-ProRule" id="PRU00542"/>
    </source>
</evidence>
<evidence type="ECO:0000256" key="4">
    <source>
        <dbReference type="SAM" id="MobiDB-lite"/>
    </source>
</evidence>
<evidence type="ECO:0000305" key="5"/>
<protein>
    <recommendedName>
        <fullName>ATP-dependent RNA helicase DBP5</fullName>
        <ecNumber>3.6.4.13</ecNumber>
    </recommendedName>
</protein>
<sequence>MSGNAQKPDASEMLADLDLNKKTKETTLEAGSAESAPSAPAENQAKSDSNLINSEYEVKVRLADIQADPNSPLYSVKSFEELGLAPELLKGLYAMKFQKPSKIQERALPLLLHNPPRNMIAQSQSGTGKTAAFSLTMLSRVDVAVPATQAICLAPSRELARQTLEVIQEMGKFTKIASQLIVPDSYEKNKAINAHIIVGTPGTVLDLMRRKMIQLGKVKTFVLDEADNMLDKQGLGDQCIRVKKFLPKDTQLVLFSATFDDSVREYARRVVPNANSLELQRNEVNVSAIKQLFMDCNDERHKFTVLCDLYGLLTIGSSIIFVQTKQTANMLYTELKREGHQVSILHGDLQSADRDRLIGDFREGRSKVLITTNVLARGIDIPTVSMVVNYDLPMTANGQPDPSTYVHRIGRTGRFGRTGVAISFIHDKKSYETLAAIQSYFGDIQITKVPTDDMDEMEKIVKKVLK</sequence>
<dbReference type="EC" id="3.6.4.13"/>
<dbReference type="EMBL" id="AE016816">
    <property type="protein sequence ID" value="AAS51304.2"/>
    <property type="molecule type" value="Genomic_DNA"/>
</dbReference>
<dbReference type="RefSeq" id="NP_983480.2">
    <property type="nucleotide sequence ID" value="NM_208833.2"/>
</dbReference>
<dbReference type="SMR" id="Q75C39"/>
<dbReference type="FunCoup" id="Q75C39">
    <property type="interactions" value="824"/>
</dbReference>
<dbReference type="STRING" id="284811.Q75C39"/>
<dbReference type="EnsemblFungi" id="AAS51304">
    <property type="protein sequence ID" value="AAS51304"/>
    <property type="gene ID" value="AGOS_ACR078W"/>
</dbReference>
<dbReference type="GeneID" id="4619605"/>
<dbReference type="KEGG" id="ago:AGOS_ACR078W"/>
<dbReference type="eggNOG" id="KOG0332">
    <property type="taxonomic scope" value="Eukaryota"/>
</dbReference>
<dbReference type="HOGENOM" id="CLU_003041_1_0_1"/>
<dbReference type="InParanoid" id="Q75C39"/>
<dbReference type="OMA" id="IAAETRW"/>
<dbReference type="OrthoDB" id="10265785at2759"/>
<dbReference type="Proteomes" id="UP000000591">
    <property type="component" value="Chromosome III"/>
</dbReference>
<dbReference type="GO" id="GO:0005934">
    <property type="term" value="C:cellular bud tip"/>
    <property type="evidence" value="ECO:0007669"/>
    <property type="project" value="EnsemblFungi"/>
</dbReference>
<dbReference type="GO" id="GO:0010494">
    <property type="term" value="C:cytoplasmic stress granule"/>
    <property type="evidence" value="ECO:0000318"/>
    <property type="project" value="GO_Central"/>
</dbReference>
<dbReference type="GO" id="GO:0031965">
    <property type="term" value="C:nuclear membrane"/>
    <property type="evidence" value="ECO:0007669"/>
    <property type="project" value="UniProtKB-SubCell"/>
</dbReference>
<dbReference type="GO" id="GO:0044614">
    <property type="term" value="C:nuclear pore cytoplasmic filaments"/>
    <property type="evidence" value="ECO:0007669"/>
    <property type="project" value="EnsemblFungi"/>
</dbReference>
<dbReference type="GO" id="GO:0005634">
    <property type="term" value="C:nucleus"/>
    <property type="evidence" value="ECO:0000318"/>
    <property type="project" value="GO_Central"/>
</dbReference>
<dbReference type="GO" id="GO:0005524">
    <property type="term" value="F:ATP binding"/>
    <property type="evidence" value="ECO:0007669"/>
    <property type="project" value="UniProtKB-KW"/>
</dbReference>
<dbReference type="GO" id="GO:0016887">
    <property type="term" value="F:ATP hydrolysis activity"/>
    <property type="evidence" value="ECO:0007669"/>
    <property type="project" value="RHEA"/>
</dbReference>
<dbReference type="GO" id="GO:0000822">
    <property type="term" value="F:inositol hexakisphosphate binding"/>
    <property type="evidence" value="ECO:0007669"/>
    <property type="project" value="EnsemblFungi"/>
</dbReference>
<dbReference type="GO" id="GO:0003729">
    <property type="term" value="F:mRNA binding"/>
    <property type="evidence" value="ECO:0000318"/>
    <property type="project" value="GO_Central"/>
</dbReference>
<dbReference type="GO" id="GO:0003724">
    <property type="term" value="F:RNA helicase activity"/>
    <property type="evidence" value="ECO:0000318"/>
    <property type="project" value="GO_Central"/>
</dbReference>
<dbReference type="GO" id="GO:0016973">
    <property type="term" value="P:poly(A)+ mRNA export from nucleus"/>
    <property type="evidence" value="ECO:0000318"/>
    <property type="project" value="GO_Central"/>
</dbReference>
<dbReference type="GO" id="GO:0015031">
    <property type="term" value="P:protein transport"/>
    <property type="evidence" value="ECO:0007669"/>
    <property type="project" value="UniProtKB-KW"/>
</dbReference>
<dbReference type="GO" id="GO:0006415">
    <property type="term" value="P:translational termination"/>
    <property type="evidence" value="ECO:0007669"/>
    <property type="project" value="EnsemblFungi"/>
</dbReference>
<dbReference type="GO" id="GO:0006409">
    <property type="term" value="P:tRNA export from nucleus"/>
    <property type="evidence" value="ECO:0007669"/>
    <property type="project" value="EnsemblFungi"/>
</dbReference>
<dbReference type="CDD" id="cd17963">
    <property type="entry name" value="DEADc_DDX19_DDX25"/>
    <property type="match status" value="1"/>
</dbReference>
<dbReference type="CDD" id="cd18787">
    <property type="entry name" value="SF2_C_DEAD"/>
    <property type="match status" value="1"/>
</dbReference>
<dbReference type="FunFam" id="3.40.50.300:FF:000849">
    <property type="entry name" value="ATP-dependent RNA helicase DBP5"/>
    <property type="match status" value="1"/>
</dbReference>
<dbReference type="FunFam" id="3.40.50.300:FF:000318">
    <property type="entry name" value="ATP-dependent RNA helicase DDX19B"/>
    <property type="match status" value="1"/>
</dbReference>
<dbReference type="Gene3D" id="3.40.50.300">
    <property type="entry name" value="P-loop containing nucleotide triphosphate hydrolases"/>
    <property type="match status" value="2"/>
</dbReference>
<dbReference type="InterPro" id="IPR011545">
    <property type="entry name" value="DEAD/DEAH_box_helicase_dom"/>
</dbReference>
<dbReference type="InterPro" id="IPR014001">
    <property type="entry name" value="Helicase_ATP-bd"/>
</dbReference>
<dbReference type="InterPro" id="IPR001650">
    <property type="entry name" value="Helicase_C-like"/>
</dbReference>
<dbReference type="InterPro" id="IPR027417">
    <property type="entry name" value="P-loop_NTPase"/>
</dbReference>
<dbReference type="InterPro" id="IPR000629">
    <property type="entry name" value="RNA-helicase_DEAD-box_CS"/>
</dbReference>
<dbReference type="InterPro" id="IPR014014">
    <property type="entry name" value="RNA_helicase_DEAD_Q_motif"/>
</dbReference>
<dbReference type="PANTHER" id="PTHR47958">
    <property type="entry name" value="ATP-DEPENDENT RNA HELICASE DBP3"/>
    <property type="match status" value="1"/>
</dbReference>
<dbReference type="Pfam" id="PF00270">
    <property type="entry name" value="DEAD"/>
    <property type="match status" value="1"/>
</dbReference>
<dbReference type="Pfam" id="PF00271">
    <property type="entry name" value="Helicase_C"/>
    <property type="match status" value="1"/>
</dbReference>
<dbReference type="SMART" id="SM00487">
    <property type="entry name" value="DEXDc"/>
    <property type="match status" value="1"/>
</dbReference>
<dbReference type="SMART" id="SM00490">
    <property type="entry name" value="HELICc"/>
    <property type="match status" value="1"/>
</dbReference>
<dbReference type="SUPFAM" id="SSF52540">
    <property type="entry name" value="P-loop containing nucleoside triphosphate hydrolases"/>
    <property type="match status" value="1"/>
</dbReference>
<dbReference type="PROSITE" id="PS00039">
    <property type="entry name" value="DEAD_ATP_HELICASE"/>
    <property type="match status" value="1"/>
</dbReference>
<dbReference type="PROSITE" id="PS51192">
    <property type="entry name" value="HELICASE_ATP_BIND_1"/>
    <property type="match status" value="1"/>
</dbReference>
<dbReference type="PROSITE" id="PS51194">
    <property type="entry name" value="HELICASE_CTER"/>
    <property type="match status" value="1"/>
</dbReference>
<dbReference type="PROSITE" id="PS51195">
    <property type="entry name" value="Q_MOTIF"/>
    <property type="match status" value="1"/>
</dbReference>
<gene>
    <name type="primary">DBP5</name>
    <name type="ordered locus">ACR078W</name>
</gene>
<reference key="1">
    <citation type="journal article" date="2004" name="Science">
        <title>The Ashbya gossypii genome as a tool for mapping the ancient Saccharomyces cerevisiae genome.</title>
        <authorList>
            <person name="Dietrich F.S."/>
            <person name="Voegeli S."/>
            <person name="Brachat S."/>
            <person name="Lerch A."/>
            <person name="Gates K."/>
            <person name="Steiner S."/>
            <person name="Mohr C."/>
            <person name="Poehlmann R."/>
            <person name="Luedi P."/>
            <person name="Choi S."/>
            <person name="Wing R.A."/>
            <person name="Flavier A."/>
            <person name="Gaffney T.D."/>
            <person name="Philippsen P."/>
        </authorList>
    </citation>
    <scope>NUCLEOTIDE SEQUENCE [LARGE SCALE GENOMIC DNA]</scope>
    <source>
        <strain>ATCC 10895 / CBS 109.51 / FGSC 9923 / NRRL Y-1056</strain>
    </source>
</reference>
<reference key="2">
    <citation type="journal article" date="2013" name="G3 (Bethesda)">
        <title>Genomes of Ashbya fungi isolated from insects reveal four mating-type loci, numerous translocations, lack of transposons, and distinct gene duplications.</title>
        <authorList>
            <person name="Dietrich F.S."/>
            <person name="Voegeli S."/>
            <person name="Kuo S."/>
            <person name="Philippsen P."/>
        </authorList>
    </citation>
    <scope>GENOME REANNOTATION</scope>
    <scope>SEQUENCE REVISION TO N-TERMINUS; 113 AND 158</scope>
    <source>
        <strain>ATCC 10895 / CBS 109.51 / FGSC 9923 / NRRL Y-1056</strain>
    </source>
</reference>
<organism>
    <name type="scientific">Eremothecium gossypii (strain ATCC 10895 / CBS 109.51 / FGSC 9923 / NRRL Y-1056)</name>
    <name type="common">Yeast</name>
    <name type="synonym">Ashbya gossypii</name>
    <dbReference type="NCBI Taxonomy" id="284811"/>
    <lineage>
        <taxon>Eukaryota</taxon>
        <taxon>Fungi</taxon>
        <taxon>Dikarya</taxon>
        <taxon>Ascomycota</taxon>
        <taxon>Saccharomycotina</taxon>
        <taxon>Saccharomycetes</taxon>
        <taxon>Saccharomycetales</taxon>
        <taxon>Saccharomycetaceae</taxon>
        <taxon>Eremothecium</taxon>
    </lineage>
</organism>
<name>DBP5_EREGS</name>
<feature type="chain" id="PRO_0000227947" description="ATP-dependent RNA helicase DBP5">
    <location>
        <begin position="1"/>
        <end position="466"/>
    </location>
</feature>
<feature type="domain" description="Helicase ATP-binding" evidence="2">
    <location>
        <begin position="110"/>
        <end position="277"/>
    </location>
</feature>
<feature type="domain" description="Helicase C-terminal" evidence="3">
    <location>
        <begin position="288"/>
        <end position="465"/>
    </location>
</feature>
<feature type="region of interest" description="Disordered" evidence="4">
    <location>
        <begin position="1"/>
        <end position="50"/>
    </location>
</feature>
<feature type="short sequence motif" description="Q motif">
    <location>
        <begin position="77"/>
        <end position="105"/>
    </location>
</feature>
<feature type="short sequence motif" description="DEAD box">
    <location>
        <begin position="224"/>
        <end position="227"/>
    </location>
</feature>
<feature type="compositionally biased region" description="Basic and acidic residues" evidence="4">
    <location>
        <begin position="18"/>
        <end position="27"/>
    </location>
</feature>
<feature type="compositionally biased region" description="Low complexity" evidence="4">
    <location>
        <begin position="29"/>
        <end position="42"/>
    </location>
</feature>
<feature type="binding site" evidence="2">
    <location>
        <begin position="123"/>
        <end position="130"/>
    </location>
    <ligand>
        <name>ATP</name>
        <dbReference type="ChEBI" id="CHEBI:30616"/>
    </ligand>
</feature>